<accession>Q8BJQ2</accession>
<accession>Q8VE17</accession>
<accession>Q8VEM4</accession>
<organism>
    <name type="scientific">Mus musculus</name>
    <name type="common">Mouse</name>
    <dbReference type="NCBI Taxonomy" id="10090"/>
    <lineage>
        <taxon>Eukaryota</taxon>
        <taxon>Metazoa</taxon>
        <taxon>Chordata</taxon>
        <taxon>Craniata</taxon>
        <taxon>Vertebrata</taxon>
        <taxon>Euteleostomi</taxon>
        <taxon>Mammalia</taxon>
        <taxon>Eutheria</taxon>
        <taxon>Euarchontoglires</taxon>
        <taxon>Glires</taxon>
        <taxon>Rodentia</taxon>
        <taxon>Myomorpha</taxon>
        <taxon>Muroidea</taxon>
        <taxon>Muridae</taxon>
        <taxon>Murinae</taxon>
        <taxon>Mus</taxon>
        <taxon>Mus</taxon>
    </lineage>
</organism>
<comment type="function">
    <text evidence="1">Negative regulator of DNA damage repair which specifically deubiquitinates monoubiquitinated FANCD2. Also involved in PCNA-mediated translesion synthesis (TLS) by deubiquitinating monoubiquitinated PCNA. Has almost no deubiquitinating activity by itself and requires the interaction with WDR48 to have a high activity.</text>
</comment>
<comment type="catalytic activity">
    <reaction evidence="1">
        <text>Thiol-dependent hydrolysis of ester, thioester, amide, peptide and isopeptide bonds formed by the C-terminal Gly of ubiquitin (a 76-residue protein attached to proteins as an intracellular targeting signal).</text>
        <dbReference type="EC" id="3.4.19.12"/>
    </reaction>
</comment>
<comment type="subunit">
    <text evidence="1">Interacts with FANCD2 and PCNA. Interacts with WDR48. Interacts with ATAD5; the interaction regulates USP1-mediated PCNA deubiquitination.</text>
</comment>
<comment type="subcellular location">
    <subcellularLocation>
        <location evidence="1">Nucleus</location>
    </subcellularLocation>
</comment>
<comment type="PTM">
    <text evidence="1">Autocatalytic cleavage of USP1 following UV irradiation inactivates it, leading to an increase in ubiquitinated PCNA, recruitment of POLH and translesion synthesis.</text>
</comment>
<comment type="PTM">
    <molecule>Ubiquitin carboxyl-terminal hydrolase 1, N-terminal fragment</molecule>
    <text evidence="1">Ubiquitinated by the CRL2(KLHDC2) complex following autocatalytic cleavage, leading to its degradation: the CRL2(KLHDC2) complex recognizes the diglycine (Gly-Gly) at the C-terminus.</text>
</comment>
<comment type="similarity">
    <text evidence="2">Belongs to the peptidase C19 family.</text>
</comment>
<proteinExistence type="evidence at protein level"/>
<gene>
    <name evidence="9" type="primary">Usp1</name>
</gene>
<name>UBP1_MOUSE</name>
<sequence length="784" mass="87456">MPGVIPSESNGLSRGSPSKKNRLSLKFFQKKETKRALDFTDSQENEEKTSEYRGSEIDQVVPAAQSSPVSCEKRENLLPFVGLNNLGNTCYLNSILQVLYFCPGFKTGVKHLFNIISRKKEALKDDSNQKDKGSCKEESLASYELICSLQSLIISVEQLQASFLLNPEKYTDELATQPRRLLNTLRELNPMYEGFLQHDAQEVLQCILGNIQETCQLLKKEEIKNLAELSGKVEEQSLQKEETGGITSTEIDSMRNTEDVKEQLPKGNWKRKSDSESSNVKKKVKLSRESQPLEENQRQTRSKRKAIGDTLEAAPKIIPKCVSESESAKPSQKKSKVKINWLKPSTKQPSILSKFCSLGKITTNQRSKGQPKEKEGDVEEDLEKYGSDHTANGGPESPGSSVTPVDSSEAKSGNKGAEQIGFELVEKLFQGQLVLRTRCLECESLTERREDFQDISVPVQEDELSKVEESSEISPEPKTEMKTLRWAISQFASVERIVGEDKYFCENCHHYTEAERSLLFDKMPEVITIHLKCFAASGLEFDCYGGGLSKINTPLLTPLKLSLEEWSTKPTNDSYGLFAVVMHSGITISSGHYTASVKVTDLNSLELDEGNFVVDQMCELGKPEPLTEEQARGTAGNYDDEVSIRVGGNAQPSKVLNKKNVEGIGLLGGQKSKADYELYNKASNPDKVVGTPFTDNRNSETNDTTNGTHESDRNKESSDQTGVNMNGLENKISYVVQSLKEYEGKWLLFDDSEVKVTEEKDFLNSLSPSTSPTSTPYLLFYKKL</sequence>
<keyword id="KW-0068">Autocatalytic cleavage</keyword>
<keyword id="KW-0227">DNA damage</keyword>
<keyword id="KW-0234">DNA repair</keyword>
<keyword id="KW-0378">Hydrolase</keyword>
<keyword id="KW-0539">Nucleus</keyword>
<keyword id="KW-0597">Phosphoprotein</keyword>
<keyword id="KW-0645">Protease</keyword>
<keyword id="KW-1185">Reference proteome</keyword>
<keyword id="KW-0788">Thiol protease</keyword>
<keyword id="KW-0832">Ubl conjugation</keyword>
<keyword id="KW-0833">Ubl conjugation pathway</keyword>
<reference evidence="8" key="1">
    <citation type="journal article" date="2005" name="Science">
        <title>The transcriptional landscape of the mammalian genome.</title>
        <authorList>
            <person name="Carninci P."/>
            <person name="Kasukawa T."/>
            <person name="Katayama S."/>
            <person name="Gough J."/>
            <person name="Frith M.C."/>
            <person name="Maeda N."/>
            <person name="Oyama R."/>
            <person name="Ravasi T."/>
            <person name="Lenhard B."/>
            <person name="Wells C."/>
            <person name="Kodzius R."/>
            <person name="Shimokawa K."/>
            <person name="Bajic V.B."/>
            <person name="Brenner S.E."/>
            <person name="Batalov S."/>
            <person name="Forrest A.R."/>
            <person name="Zavolan M."/>
            <person name="Davis M.J."/>
            <person name="Wilming L.G."/>
            <person name="Aidinis V."/>
            <person name="Allen J.E."/>
            <person name="Ambesi-Impiombato A."/>
            <person name="Apweiler R."/>
            <person name="Aturaliya R.N."/>
            <person name="Bailey T.L."/>
            <person name="Bansal M."/>
            <person name="Baxter L."/>
            <person name="Beisel K.W."/>
            <person name="Bersano T."/>
            <person name="Bono H."/>
            <person name="Chalk A.M."/>
            <person name="Chiu K.P."/>
            <person name="Choudhary V."/>
            <person name="Christoffels A."/>
            <person name="Clutterbuck D.R."/>
            <person name="Crowe M.L."/>
            <person name="Dalla E."/>
            <person name="Dalrymple B.P."/>
            <person name="de Bono B."/>
            <person name="Della Gatta G."/>
            <person name="di Bernardo D."/>
            <person name="Down T."/>
            <person name="Engstrom P."/>
            <person name="Fagiolini M."/>
            <person name="Faulkner G."/>
            <person name="Fletcher C.F."/>
            <person name="Fukushima T."/>
            <person name="Furuno M."/>
            <person name="Futaki S."/>
            <person name="Gariboldi M."/>
            <person name="Georgii-Hemming P."/>
            <person name="Gingeras T.R."/>
            <person name="Gojobori T."/>
            <person name="Green R.E."/>
            <person name="Gustincich S."/>
            <person name="Harbers M."/>
            <person name="Hayashi Y."/>
            <person name="Hensch T.K."/>
            <person name="Hirokawa N."/>
            <person name="Hill D."/>
            <person name="Huminiecki L."/>
            <person name="Iacono M."/>
            <person name="Ikeo K."/>
            <person name="Iwama A."/>
            <person name="Ishikawa T."/>
            <person name="Jakt M."/>
            <person name="Kanapin A."/>
            <person name="Katoh M."/>
            <person name="Kawasawa Y."/>
            <person name="Kelso J."/>
            <person name="Kitamura H."/>
            <person name="Kitano H."/>
            <person name="Kollias G."/>
            <person name="Krishnan S.P."/>
            <person name="Kruger A."/>
            <person name="Kummerfeld S.K."/>
            <person name="Kurochkin I.V."/>
            <person name="Lareau L.F."/>
            <person name="Lazarevic D."/>
            <person name="Lipovich L."/>
            <person name="Liu J."/>
            <person name="Liuni S."/>
            <person name="McWilliam S."/>
            <person name="Madan Babu M."/>
            <person name="Madera M."/>
            <person name="Marchionni L."/>
            <person name="Matsuda H."/>
            <person name="Matsuzawa S."/>
            <person name="Miki H."/>
            <person name="Mignone F."/>
            <person name="Miyake S."/>
            <person name="Morris K."/>
            <person name="Mottagui-Tabar S."/>
            <person name="Mulder N."/>
            <person name="Nakano N."/>
            <person name="Nakauchi H."/>
            <person name="Ng P."/>
            <person name="Nilsson R."/>
            <person name="Nishiguchi S."/>
            <person name="Nishikawa S."/>
            <person name="Nori F."/>
            <person name="Ohara O."/>
            <person name="Okazaki Y."/>
            <person name="Orlando V."/>
            <person name="Pang K.C."/>
            <person name="Pavan W.J."/>
            <person name="Pavesi G."/>
            <person name="Pesole G."/>
            <person name="Petrovsky N."/>
            <person name="Piazza S."/>
            <person name="Reed J."/>
            <person name="Reid J.F."/>
            <person name="Ring B.Z."/>
            <person name="Ringwald M."/>
            <person name="Rost B."/>
            <person name="Ruan Y."/>
            <person name="Salzberg S.L."/>
            <person name="Sandelin A."/>
            <person name="Schneider C."/>
            <person name="Schoenbach C."/>
            <person name="Sekiguchi K."/>
            <person name="Semple C.A."/>
            <person name="Seno S."/>
            <person name="Sessa L."/>
            <person name="Sheng Y."/>
            <person name="Shibata Y."/>
            <person name="Shimada H."/>
            <person name="Shimada K."/>
            <person name="Silva D."/>
            <person name="Sinclair B."/>
            <person name="Sperling S."/>
            <person name="Stupka E."/>
            <person name="Sugiura K."/>
            <person name="Sultana R."/>
            <person name="Takenaka Y."/>
            <person name="Taki K."/>
            <person name="Tammoja K."/>
            <person name="Tan S.L."/>
            <person name="Tang S."/>
            <person name="Taylor M.S."/>
            <person name="Tegner J."/>
            <person name="Teichmann S.A."/>
            <person name="Ueda H.R."/>
            <person name="van Nimwegen E."/>
            <person name="Verardo R."/>
            <person name="Wei C.L."/>
            <person name="Yagi K."/>
            <person name="Yamanishi H."/>
            <person name="Zabarovsky E."/>
            <person name="Zhu S."/>
            <person name="Zimmer A."/>
            <person name="Hide W."/>
            <person name="Bult C."/>
            <person name="Grimmond S.M."/>
            <person name="Teasdale R.D."/>
            <person name="Liu E.T."/>
            <person name="Brusic V."/>
            <person name="Quackenbush J."/>
            <person name="Wahlestedt C."/>
            <person name="Mattick J.S."/>
            <person name="Hume D.A."/>
            <person name="Kai C."/>
            <person name="Sasaki D."/>
            <person name="Tomaru Y."/>
            <person name="Fukuda S."/>
            <person name="Kanamori-Katayama M."/>
            <person name="Suzuki M."/>
            <person name="Aoki J."/>
            <person name="Arakawa T."/>
            <person name="Iida J."/>
            <person name="Imamura K."/>
            <person name="Itoh M."/>
            <person name="Kato T."/>
            <person name="Kawaji H."/>
            <person name="Kawagashira N."/>
            <person name="Kawashima T."/>
            <person name="Kojima M."/>
            <person name="Kondo S."/>
            <person name="Konno H."/>
            <person name="Nakano K."/>
            <person name="Ninomiya N."/>
            <person name="Nishio T."/>
            <person name="Okada M."/>
            <person name="Plessy C."/>
            <person name="Shibata K."/>
            <person name="Shiraki T."/>
            <person name="Suzuki S."/>
            <person name="Tagami M."/>
            <person name="Waki K."/>
            <person name="Watahiki A."/>
            <person name="Okamura-Oho Y."/>
            <person name="Suzuki H."/>
            <person name="Kawai J."/>
            <person name="Hayashizaki Y."/>
        </authorList>
    </citation>
    <scope>NUCLEOTIDE SEQUENCE [LARGE SCALE MRNA]</scope>
    <source>
        <strain evidence="8">C57BL/6J</strain>
        <tissue evidence="8">Adipose tissue</tissue>
    </source>
</reference>
<reference key="2">
    <citation type="journal article" date="2009" name="PLoS Biol.">
        <title>Lineage-specific biology revealed by a finished genome assembly of the mouse.</title>
        <authorList>
            <person name="Church D.M."/>
            <person name="Goodstadt L."/>
            <person name="Hillier L.W."/>
            <person name="Zody M.C."/>
            <person name="Goldstein S."/>
            <person name="She X."/>
            <person name="Bult C.J."/>
            <person name="Agarwala R."/>
            <person name="Cherry J.L."/>
            <person name="DiCuccio M."/>
            <person name="Hlavina W."/>
            <person name="Kapustin Y."/>
            <person name="Meric P."/>
            <person name="Maglott D."/>
            <person name="Birtle Z."/>
            <person name="Marques A.C."/>
            <person name="Graves T."/>
            <person name="Zhou S."/>
            <person name="Teague B."/>
            <person name="Potamousis K."/>
            <person name="Churas C."/>
            <person name="Place M."/>
            <person name="Herschleb J."/>
            <person name="Runnheim R."/>
            <person name="Forrest D."/>
            <person name="Amos-Landgraf J."/>
            <person name="Schwartz D.C."/>
            <person name="Cheng Z."/>
            <person name="Lindblad-Toh K."/>
            <person name="Eichler E.E."/>
            <person name="Ponting C.P."/>
        </authorList>
    </citation>
    <scope>NUCLEOTIDE SEQUENCE [LARGE SCALE GENOMIC DNA]</scope>
    <source>
        <strain>C57BL/6J</strain>
    </source>
</reference>
<reference evidence="7" key="3">
    <citation type="journal article" date="2004" name="Genome Res.">
        <title>The status, quality, and expansion of the NIH full-length cDNA project: the Mammalian Gene Collection (MGC).</title>
        <authorList>
            <consortium name="The MGC Project Team"/>
        </authorList>
    </citation>
    <scope>NUCLEOTIDE SEQUENCE [LARGE SCALE MRNA]</scope>
    <source>
        <strain evidence="7">FVB/N</strain>
        <tissue evidence="7">Mammary gland</tissue>
    </source>
</reference>
<reference key="4">
    <citation type="journal article" date="2010" name="Cell">
        <title>A tissue-specific atlas of mouse protein phosphorylation and expression.</title>
        <authorList>
            <person name="Huttlin E.L."/>
            <person name="Jedrychowski M.P."/>
            <person name="Elias J.E."/>
            <person name="Goswami T."/>
            <person name="Rad R."/>
            <person name="Beausoleil S.A."/>
            <person name="Villen J."/>
            <person name="Haas W."/>
            <person name="Sowa M.E."/>
            <person name="Gygi S.P."/>
        </authorList>
    </citation>
    <scope>PHOSPHORYLATION [LARGE SCALE ANALYSIS] AT SER-767</scope>
    <scope>IDENTIFICATION BY MASS SPECTROMETRY [LARGE SCALE ANALYSIS]</scope>
    <source>
        <tissue>Testis</tissue>
    </source>
</reference>
<protein>
    <recommendedName>
        <fullName>Ubiquitin carboxyl-terminal hydrolase 1</fullName>
        <ecNumber evidence="1">3.4.19.12</ecNumber>
    </recommendedName>
    <alternativeName>
        <fullName>Deubiquitinating enzyme 1</fullName>
    </alternativeName>
    <alternativeName>
        <fullName>Ubiquitin thioesterase 1</fullName>
    </alternativeName>
    <alternativeName>
        <fullName>Ubiquitin-specific-processing protease 1</fullName>
    </alternativeName>
    <component>
        <recommendedName>
            <fullName evidence="1">Ubiquitin carboxyl-terminal hydrolase 1, N-terminal fragment</fullName>
        </recommendedName>
    </component>
</protein>
<dbReference type="EC" id="3.4.19.12" evidence="1"/>
<dbReference type="EMBL" id="AK080882">
    <property type="protein sequence ID" value="BAC38059.1"/>
    <property type="molecule type" value="mRNA"/>
</dbReference>
<dbReference type="EMBL" id="AL627349">
    <property type="status" value="NOT_ANNOTATED_CDS"/>
    <property type="molecule type" value="Genomic_DNA"/>
</dbReference>
<dbReference type="EMBL" id="BC018179">
    <property type="protein sequence ID" value="AAH18179.1"/>
    <property type="molecule type" value="mRNA"/>
</dbReference>
<dbReference type="EMBL" id="BC020007">
    <property type="protein sequence ID" value="AAH20007.1"/>
    <property type="molecule type" value="mRNA"/>
</dbReference>
<dbReference type="CCDS" id="CCDS18381.1"/>
<dbReference type="RefSeq" id="NP_001288343.1">
    <property type="nucleotide sequence ID" value="NM_001301414.1"/>
</dbReference>
<dbReference type="RefSeq" id="NP_666256.2">
    <property type="nucleotide sequence ID" value="NM_146144.4"/>
</dbReference>
<dbReference type="SMR" id="Q8BJQ2"/>
<dbReference type="BioGRID" id="230966">
    <property type="interactions" value="34"/>
</dbReference>
<dbReference type="FunCoup" id="Q8BJQ2">
    <property type="interactions" value="4481"/>
</dbReference>
<dbReference type="STRING" id="10090.ENSMUSP00000030289"/>
<dbReference type="MEROPS" id="C19.019"/>
<dbReference type="iPTMnet" id="Q8BJQ2"/>
<dbReference type="PhosphoSitePlus" id="Q8BJQ2"/>
<dbReference type="jPOST" id="Q8BJQ2"/>
<dbReference type="PaxDb" id="10090-ENSMUSP00000030289"/>
<dbReference type="PeptideAtlas" id="Q8BJQ2"/>
<dbReference type="ProteomicsDB" id="297791"/>
<dbReference type="Pumba" id="Q8BJQ2"/>
<dbReference type="Antibodypedia" id="33332">
    <property type="antibodies" value="338 antibodies from 35 providers"/>
</dbReference>
<dbReference type="DNASU" id="230484"/>
<dbReference type="Ensembl" id="ENSMUST00000030289.9">
    <property type="protein sequence ID" value="ENSMUSP00000030289.3"/>
    <property type="gene ID" value="ENSMUSG00000028560.12"/>
</dbReference>
<dbReference type="Ensembl" id="ENSMUST00000091358.11">
    <property type="protein sequence ID" value="ENSMUSP00000088917.5"/>
    <property type="gene ID" value="ENSMUSG00000028560.12"/>
</dbReference>
<dbReference type="GeneID" id="230484"/>
<dbReference type="KEGG" id="mmu:230484"/>
<dbReference type="UCSC" id="uc008tum.2">
    <property type="organism name" value="mouse"/>
</dbReference>
<dbReference type="AGR" id="MGI:2385198"/>
<dbReference type="CTD" id="7398"/>
<dbReference type="MGI" id="MGI:2385198">
    <property type="gene designation" value="Usp1"/>
</dbReference>
<dbReference type="VEuPathDB" id="HostDB:ENSMUSG00000028560"/>
<dbReference type="eggNOG" id="KOG1864">
    <property type="taxonomic scope" value="Eukaryota"/>
</dbReference>
<dbReference type="GeneTree" id="ENSGT00910000144243"/>
<dbReference type="HOGENOM" id="CLU_019874_0_0_1"/>
<dbReference type="InParanoid" id="Q8BJQ2"/>
<dbReference type="OMA" id="MNTTCHG"/>
<dbReference type="OrthoDB" id="10062454at2759"/>
<dbReference type="PhylomeDB" id="Q8BJQ2"/>
<dbReference type="TreeFam" id="TF331057"/>
<dbReference type="Reactome" id="R-MMU-110314">
    <property type="pathway name" value="Recognition of DNA damage by PCNA-containing replication complex"/>
</dbReference>
<dbReference type="Reactome" id="R-MMU-6783310">
    <property type="pathway name" value="Fanconi Anemia Pathway"/>
</dbReference>
<dbReference type="BioGRID-ORCS" id="230484">
    <property type="hits" value="5 hits in 113 CRISPR screens"/>
</dbReference>
<dbReference type="ChiTaRS" id="Usp1">
    <property type="organism name" value="mouse"/>
</dbReference>
<dbReference type="PRO" id="PR:Q8BJQ2"/>
<dbReference type="Proteomes" id="UP000000589">
    <property type="component" value="Chromosome 4"/>
</dbReference>
<dbReference type="RNAct" id="Q8BJQ2">
    <property type="molecule type" value="protein"/>
</dbReference>
<dbReference type="Bgee" id="ENSMUSG00000028560">
    <property type="expression patterns" value="Expressed in cleaving embryo and 263 other cell types or tissues"/>
</dbReference>
<dbReference type="ExpressionAtlas" id="Q8BJQ2">
    <property type="expression patterns" value="baseline and differential"/>
</dbReference>
<dbReference type="GO" id="GO:0005654">
    <property type="term" value="C:nucleoplasm"/>
    <property type="evidence" value="ECO:0007669"/>
    <property type="project" value="Ensembl"/>
</dbReference>
<dbReference type="GO" id="GO:0005634">
    <property type="term" value="C:nucleus"/>
    <property type="evidence" value="ECO:0000250"/>
    <property type="project" value="UniProtKB"/>
</dbReference>
<dbReference type="GO" id="GO:0004843">
    <property type="term" value="F:cysteine-type deubiquitinase activity"/>
    <property type="evidence" value="ECO:0000250"/>
    <property type="project" value="UniProtKB"/>
</dbReference>
<dbReference type="GO" id="GO:0004197">
    <property type="term" value="F:cysteine-type endopeptidase activity"/>
    <property type="evidence" value="ECO:0007669"/>
    <property type="project" value="InterPro"/>
</dbReference>
<dbReference type="GO" id="GO:0006281">
    <property type="term" value="P:DNA repair"/>
    <property type="evidence" value="ECO:0007669"/>
    <property type="project" value="UniProtKB-KW"/>
</dbReference>
<dbReference type="GO" id="GO:0035520">
    <property type="term" value="P:monoubiquitinated protein deubiquitination"/>
    <property type="evidence" value="ECO:0000250"/>
    <property type="project" value="UniProtKB"/>
</dbReference>
<dbReference type="GO" id="GO:0046427">
    <property type="term" value="P:positive regulation of receptor signaling pathway via JAK-STAT"/>
    <property type="evidence" value="ECO:0007669"/>
    <property type="project" value="Ensembl"/>
</dbReference>
<dbReference type="GO" id="GO:0016579">
    <property type="term" value="P:protein deubiquitination"/>
    <property type="evidence" value="ECO:0000250"/>
    <property type="project" value="UniProtKB"/>
</dbReference>
<dbReference type="GO" id="GO:0006508">
    <property type="term" value="P:proteolysis"/>
    <property type="evidence" value="ECO:0007669"/>
    <property type="project" value="UniProtKB-KW"/>
</dbReference>
<dbReference type="GO" id="GO:0006282">
    <property type="term" value="P:regulation of DNA repair"/>
    <property type="evidence" value="ECO:0000250"/>
    <property type="project" value="UniProtKB"/>
</dbReference>
<dbReference type="GO" id="GO:0009411">
    <property type="term" value="P:response to UV"/>
    <property type="evidence" value="ECO:0000250"/>
    <property type="project" value="UniProtKB"/>
</dbReference>
<dbReference type="GO" id="GO:0001501">
    <property type="term" value="P:skeletal system development"/>
    <property type="evidence" value="ECO:0000315"/>
    <property type="project" value="MGI"/>
</dbReference>
<dbReference type="CDD" id="cd02671">
    <property type="entry name" value="Peptidase_C19O"/>
    <property type="match status" value="1"/>
</dbReference>
<dbReference type="FunFam" id="3.90.70.10:FF:000053">
    <property type="entry name" value="Ubiquitin carboxyl-terminal hydrolase 1"/>
    <property type="match status" value="1"/>
</dbReference>
<dbReference type="FunFam" id="3.90.70.10:FF:000077">
    <property type="entry name" value="Ubiquitin carboxyl-terminal hydrolase 1"/>
    <property type="match status" value="1"/>
</dbReference>
<dbReference type="Gene3D" id="3.90.70.10">
    <property type="entry name" value="Cysteine proteinases"/>
    <property type="match status" value="2"/>
</dbReference>
<dbReference type="InterPro" id="IPR038765">
    <property type="entry name" value="Papain-like_cys_pep_sf"/>
</dbReference>
<dbReference type="InterPro" id="IPR050164">
    <property type="entry name" value="Peptidase_C19"/>
</dbReference>
<dbReference type="InterPro" id="IPR001394">
    <property type="entry name" value="Peptidase_C19_UCH"/>
</dbReference>
<dbReference type="InterPro" id="IPR033815">
    <property type="entry name" value="USP1"/>
</dbReference>
<dbReference type="InterPro" id="IPR018200">
    <property type="entry name" value="USP_CS"/>
</dbReference>
<dbReference type="InterPro" id="IPR028889">
    <property type="entry name" value="USP_dom"/>
</dbReference>
<dbReference type="PANTHER" id="PTHR24006">
    <property type="entry name" value="UBIQUITIN CARBOXYL-TERMINAL HYDROLASE"/>
    <property type="match status" value="1"/>
</dbReference>
<dbReference type="PANTHER" id="PTHR24006:SF905">
    <property type="entry name" value="UBIQUITIN CARBOXYL-TERMINAL HYDROLASE 1"/>
    <property type="match status" value="1"/>
</dbReference>
<dbReference type="Pfam" id="PF00443">
    <property type="entry name" value="UCH"/>
    <property type="match status" value="2"/>
</dbReference>
<dbReference type="SUPFAM" id="SSF54001">
    <property type="entry name" value="Cysteine proteinases"/>
    <property type="match status" value="1"/>
</dbReference>
<dbReference type="PROSITE" id="PS00972">
    <property type="entry name" value="USP_1"/>
    <property type="match status" value="1"/>
</dbReference>
<dbReference type="PROSITE" id="PS00973">
    <property type="entry name" value="USP_2"/>
    <property type="match status" value="1"/>
</dbReference>
<dbReference type="PROSITE" id="PS50235">
    <property type="entry name" value="USP_3"/>
    <property type="match status" value="1"/>
</dbReference>
<evidence type="ECO:0000250" key="1">
    <source>
        <dbReference type="UniProtKB" id="O94782"/>
    </source>
</evidence>
<evidence type="ECO:0000255" key="2"/>
<evidence type="ECO:0000255" key="3">
    <source>
        <dbReference type="PROSITE-ProRule" id="PRU10092"/>
    </source>
</evidence>
<evidence type="ECO:0000255" key="4">
    <source>
        <dbReference type="PROSITE-ProRule" id="PRU10093"/>
    </source>
</evidence>
<evidence type="ECO:0000256" key="5">
    <source>
        <dbReference type="SAM" id="MobiDB-lite"/>
    </source>
</evidence>
<evidence type="ECO:0000305" key="6"/>
<evidence type="ECO:0000312" key="7">
    <source>
        <dbReference type="EMBL" id="AAH20007.1"/>
    </source>
</evidence>
<evidence type="ECO:0000312" key="8">
    <source>
        <dbReference type="EMBL" id="BAC38059.1"/>
    </source>
</evidence>
<evidence type="ECO:0000312" key="9">
    <source>
        <dbReference type="MGI" id="MGI:2385198"/>
    </source>
</evidence>
<evidence type="ECO:0007744" key="10">
    <source>
    </source>
</evidence>
<feature type="chain" id="PRO_0000306287" description="Ubiquitin carboxyl-terminal hydrolase 1">
    <location>
        <begin position="1"/>
        <end position="784"/>
    </location>
</feature>
<feature type="chain" id="PRO_0000453163" description="Ubiquitin carboxyl-terminal hydrolase 1, N-terminal fragment" evidence="1">
    <location>
        <begin position="1"/>
        <end position="669"/>
    </location>
</feature>
<feature type="domain" description="USP">
    <location>
        <begin position="81"/>
        <end position="784"/>
    </location>
</feature>
<feature type="region of interest" description="Disordered" evidence="5">
    <location>
        <begin position="1"/>
        <end position="21"/>
    </location>
</feature>
<feature type="region of interest" description="Disordered" evidence="5">
    <location>
        <begin position="34"/>
        <end position="56"/>
    </location>
</feature>
<feature type="region of interest" description="Disordered" evidence="5">
    <location>
        <begin position="233"/>
        <end position="342"/>
    </location>
</feature>
<feature type="region of interest" description="Disordered" evidence="5">
    <location>
        <begin position="362"/>
        <end position="414"/>
    </location>
</feature>
<feature type="region of interest" description="Disordered" evidence="5">
    <location>
        <begin position="684"/>
        <end position="725"/>
    </location>
</feature>
<feature type="compositionally biased region" description="Polar residues" evidence="5">
    <location>
        <begin position="7"/>
        <end position="16"/>
    </location>
</feature>
<feature type="compositionally biased region" description="Basic and acidic residues" evidence="5">
    <location>
        <begin position="45"/>
        <end position="56"/>
    </location>
</feature>
<feature type="compositionally biased region" description="Basic and acidic residues" evidence="5">
    <location>
        <begin position="233"/>
        <end position="243"/>
    </location>
</feature>
<feature type="compositionally biased region" description="Basic and acidic residues" evidence="5">
    <location>
        <begin position="252"/>
        <end position="264"/>
    </location>
</feature>
<feature type="compositionally biased region" description="Polar residues" evidence="5">
    <location>
        <begin position="693"/>
        <end position="708"/>
    </location>
</feature>
<feature type="compositionally biased region" description="Basic and acidic residues" evidence="5">
    <location>
        <begin position="709"/>
        <end position="718"/>
    </location>
</feature>
<feature type="active site" description="Nucleophile" evidence="3 4">
    <location>
        <position position="90"/>
    </location>
</feature>
<feature type="active site" description="Proton acceptor" evidence="3 4">
    <location>
        <position position="592"/>
    </location>
</feature>
<feature type="site" description="Cleavage; by autolysis" evidence="1">
    <location>
        <begin position="669"/>
        <end position="670"/>
    </location>
</feature>
<feature type="modified residue" description="Phosphoserine" evidence="1">
    <location>
        <position position="16"/>
    </location>
</feature>
<feature type="modified residue" description="Phosphoserine" evidence="1">
    <location>
        <position position="42"/>
    </location>
</feature>
<feature type="modified residue" description="Phosphoserine" evidence="1">
    <location>
        <position position="67"/>
    </location>
</feature>
<feature type="modified residue" description="Phosphoserine" evidence="1">
    <location>
        <position position="474"/>
    </location>
</feature>
<feature type="modified residue" description="Phosphoserine" evidence="10">
    <location>
        <position position="767"/>
    </location>
</feature>
<feature type="sequence conflict" description="In Ref. 3; AAH20007." evidence="6" ref="3">
    <original>N</original>
    <variation>K</variation>
    <location>
        <position position="84"/>
    </location>
</feature>
<feature type="sequence conflict" description="In Ref. 3; AAH18179/AAH20007." evidence="6" ref="3">
    <original>P</original>
    <variation>S</variation>
    <location>
        <position position="344"/>
    </location>
</feature>